<organism>
    <name type="scientific">Salmonella paratyphi C (strain RKS4594)</name>
    <dbReference type="NCBI Taxonomy" id="476213"/>
    <lineage>
        <taxon>Bacteria</taxon>
        <taxon>Pseudomonadati</taxon>
        <taxon>Pseudomonadota</taxon>
        <taxon>Gammaproteobacteria</taxon>
        <taxon>Enterobacterales</taxon>
        <taxon>Enterobacteriaceae</taxon>
        <taxon>Salmonella</taxon>
    </lineage>
</organism>
<comment type="function">
    <text evidence="1">DNA-dependent RNA polymerase catalyzes the transcription of DNA into RNA using the four ribonucleoside triphosphates as substrates.</text>
</comment>
<comment type="catalytic activity">
    <reaction evidence="1">
        <text>RNA(n) + a ribonucleoside 5'-triphosphate = RNA(n+1) + diphosphate</text>
        <dbReference type="Rhea" id="RHEA:21248"/>
        <dbReference type="Rhea" id="RHEA-COMP:14527"/>
        <dbReference type="Rhea" id="RHEA-COMP:17342"/>
        <dbReference type="ChEBI" id="CHEBI:33019"/>
        <dbReference type="ChEBI" id="CHEBI:61557"/>
        <dbReference type="ChEBI" id="CHEBI:140395"/>
        <dbReference type="EC" id="2.7.7.6"/>
    </reaction>
</comment>
<comment type="subunit">
    <text evidence="1">The RNAP catalytic core consists of 2 alpha, 1 beta, 1 beta' and 1 omega subunit. When a sigma factor is associated with the core the holoenzyme is formed, which can initiate transcription.</text>
</comment>
<comment type="similarity">
    <text evidence="1">Belongs to the RNA polymerase beta chain family.</text>
</comment>
<feature type="chain" id="PRO_1000165819" description="DNA-directed RNA polymerase subunit beta">
    <location>
        <begin position="1"/>
        <end position="1342"/>
    </location>
</feature>
<accession>C0Q2R7</accession>
<gene>
    <name evidence="1" type="primary">rpoB</name>
    <name type="ordered locus">SPC_3985</name>
</gene>
<protein>
    <recommendedName>
        <fullName evidence="1">DNA-directed RNA polymerase subunit beta</fullName>
        <shortName evidence="1">RNAP subunit beta</shortName>
        <ecNumber evidence="1">2.7.7.6</ecNumber>
    </recommendedName>
    <alternativeName>
        <fullName evidence="1">RNA polymerase subunit beta</fullName>
    </alternativeName>
    <alternativeName>
        <fullName evidence="1">Transcriptase subunit beta</fullName>
    </alternativeName>
</protein>
<proteinExistence type="inferred from homology"/>
<dbReference type="EC" id="2.7.7.6" evidence="1"/>
<dbReference type="EMBL" id="CP000857">
    <property type="protein sequence ID" value="ACN48053.1"/>
    <property type="molecule type" value="Genomic_DNA"/>
</dbReference>
<dbReference type="RefSeq" id="WP_000263105.1">
    <property type="nucleotide sequence ID" value="NC_012125.1"/>
</dbReference>
<dbReference type="SMR" id="C0Q2R7"/>
<dbReference type="KEGG" id="sei:SPC_3985"/>
<dbReference type="HOGENOM" id="CLU_000524_4_0_6"/>
<dbReference type="Proteomes" id="UP000001599">
    <property type="component" value="Chromosome"/>
</dbReference>
<dbReference type="GO" id="GO:0000428">
    <property type="term" value="C:DNA-directed RNA polymerase complex"/>
    <property type="evidence" value="ECO:0007669"/>
    <property type="project" value="UniProtKB-KW"/>
</dbReference>
<dbReference type="GO" id="GO:0003677">
    <property type="term" value="F:DNA binding"/>
    <property type="evidence" value="ECO:0007669"/>
    <property type="project" value="UniProtKB-UniRule"/>
</dbReference>
<dbReference type="GO" id="GO:0003899">
    <property type="term" value="F:DNA-directed RNA polymerase activity"/>
    <property type="evidence" value="ECO:0007669"/>
    <property type="project" value="UniProtKB-UniRule"/>
</dbReference>
<dbReference type="GO" id="GO:0032549">
    <property type="term" value="F:ribonucleoside binding"/>
    <property type="evidence" value="ECO:0007669"/>
    <property type="project" value="InterPro"/>
</dbReference>
<dbReference type="GO" id="GO:0006351">
    <property type="term" value="P:DNA-templated transcription"/>
    <property type="evidence" value="ECO:0007669"/>
    <property type="project" value="UniProtKB-UniRule"/>
</dbReference>
<dbReference type="CDD" id="cd00653">
    <property type="entry name" value="RNA_pol_B_RPB2"/>
    <property type="match status" value="1"/>
</dbReference>
<dbReference type="FunFam" id="2.30.150.10:FF:000001">
    <property type="entry name" value="DNA-directed RNA polymerase subunit beta"/>
    <property type="match status" value="1"/>
</dbReference>
<dbReference type="FunFam" id="2.40.270.10:FF:000003">
    <property type="entry name" value="DNA-directed RNA polymerase subunit beta"/>
    <property type="match status" value="1"/>
</dbReference>
<dbReference type="FunFam" id="2.40.270.10:FF:000004">
    <property type="entry name" value="DNA-directed RNA polymerase subunit beta"/>
    <property type="match status" value="1"/>
</dbReference>
<dbReference type="FunFam" id="2.40.50.100:FF:000006">
    <property type="entry name" value="DNA-directed RNA polymerase subunit beta"/>
    <property type="match status" value="1"/>
</dbReference>
<dbReference type="FunFam" id="2.40.50.150:FF:000001">
    <property type="entry name" value="DNA-directed RNA polymerase subunit beta"/>
    <property type="match status" value="1"/>
</dbReference>
<dbReference type="FunFam" id="3.90.1100.10:FF:000002">
    <property type="entry name" value="DNA-directed RNA polymerase subunit beta"/>
    <property type="match status" value="1"/>
</dbReference>
<dbReference type="FunFam" id="3.90.1110.10:FF:000001">
    <property type="entry name" value="DNA-directed RNA polymerase subunit beta"/>
    <property type="match status" value="1"/>
</dbReference>
<dbReference type="FunFam" id="3.90.1110.10:FF:000004">
    <property type="entry name" value="DNA-directed RNA polymerase subunit beta"/>
    <property type="match status" value="1"/>
</dbReference>
<dbReference type="FunFam" id="3.90.1800.10:FF:000001">
    <property type="entry name" value="DNA-directed RNA polymerase subunit beta"/>
    <property type="match status" value="1"/>
</dbReference>
<dbReference type="Gene3D" id="2.40.50.100">
    <property type="match status" value="1"/>
</dbReference>
<dbReference type="Gene3D" id="2.40.50.150">
    <property type="match status" value="1"/>
</dbReference>
<dbReference type="Gene3D" id="3.90.1100.10">
    <property type="match status" value="2"/>
</dbReference>
<dbReference type="Gene3D" id="6.10.140.1670">
    <property type="match status" value="1"/>
</dbReference>
<dbReference type="Gene3D" id="2.30.150.10">
    <property type="entry name" value="DNA-directed RNA polymerase, beta subunit, external 1 domain"/>
    <property type="match status" value="1"/>
</dbReference>
<dbReference type="Gene3D" id="2.40.270.10">
    <property type="entry name" value="DNA-directed RNA polymerase, subunit 2, domain 6"/>
    <property type="match status" value="1"/>
</dbReference>
<dbReference type="Gene3D" id="3.90.1800.10">
    <property type="entry name" value="RNA polymerase alpha subunit dimerisation domain"/>
    <property type="match status" value="1"/>
</dbReference>
<dbReference type="Gene3D" id="3.90.1110.10">
    <property type="entry name" value="RNA polymerase Rpb2, domain 2"/>
    <property type="match status" value="1"/>
</dbReference>
<dbReference type="HAMAP" id="MF_01321">
    <property type="entry name" value="RNApol_bact_RpoB"/>
    <property type="match status" value="1"/>
</dbReference>
<dbReference type="InterPro" id="IPR042107">
    <property type="entry name" value="DNA-dir_RNA_pol_bsu_ext_1_sf"/>
</dbReference>
<dbReference type="InterPro" id="IPR019462">
    <property type="entry name" value="DNA-dir_RNA_pol_bsu_external_1"/>
</dbReference>
<dbReference type="InterPro" id="IPR015712">
    <property type="entry name" value="DNA-dir_RNA_pol_su2"/>
</dbReference>
<dbReference type="InterPro" id="IPR007120">
    <property type="entry name" value="DNA-dir_RNAP_su2_dom"/>
</dbReference>
<dbReference type="InterPro" id="IPR037033">
    <property type="entry name" value="DNA-dir_RNAP_su2_hyb_sf"/>
</dbReference>
<dbReference type="InterPro" id="IPR010243">
    <property type="entry name" value="RNA_pol_bsu_bac"/>
</dbReference>
<dbReference type="InterPro" id="IPR007121">
    <property type="entry name" value="RNA_pol_bsu_CS"/>
</dbReference>
<dbReference type="InterPro" id="IPR007644">
    <property type="entry name" value="RNA_pol_bsu_protrusion"/>
</dbReference>
<dbReference type="InterPro" id="IPR007642">
    <property type="entry name" value="RNA_pol_Rpb2_2"/>
</dbReference>
<dbReference type="InterPro" id="IPR037034">
    <property type="entry name" value="RNA_pol_Rpb2_2_sf"/>
</dbReference>
<dbReference type="InterPro" id="IPR007645">
    <property type="entry name" value="RNA_pol_Rpb2_3"/>
</dbReference>
<dbReference type="InterPro" id="IPR007641">
    <property type="entry name" value="RNA_pol_Rpb2_7"/>
</dbReference>
<dbReference type="InterPro" id="IPR014724">
    <property type="entry name" value="RNA_pol_RPB2_OB-fold"/>
</dbReference>
<dbReference type="NCBIfam" id="NF001616">
    <property type="entry name" value="PRK00405.1"/>
    <property type="match status" value="1"/>
</dbReference>
<dbReference type="NCBIfam" id="TIGR02013">
    <property type="entry name" value="rpoB"/>
    <property type="match status" value="1"/>
</dbReference>
<dbReference type="PANTHER" id="PTHR20856">
    <property type="entry name" value="DNA-DIRECTED RNA POLYMERASE I SUBUNIT 2"/>
    <property type="match status" value="1"/>
</dbReference>
<dbReference type="Pfam" id="PF04563">
    <property type="entry name" value="RNA_pol_Rpb2_1"/>
    <property type="match status" value="1"/>
</dbReference>
<dbReference type="Pfam" id="PF04561">
    <property type="entry name" value="RNA_pol_Rpb2_2"/>
    <property type="match status" value="2"/>
</dbReference>
<dbReference type="Pfam" id="PF04565">
    <property type="entry name" value="RNA_pol_Rpb2_3"/>
    <property type="match status" value="1"/>
</dbReference>
<dbReference type="Pfam" id="PF10385">
    <property type="entry name" value="RNA_pol_Rpb2_45"/>
    <property type="match status" value="1"/>
</dbReference>
<dbReference type="Pfam" id="PF00562">
    <property type="entry name" value="RNA_pol_Rpb2_6"/>
    <property type="match status" value="1"/>
</dbReference>
<dbReference type="Pfam" id="PF04560">
    <property type="entry name" value="RNA_pol_Rpb2_7"/>
    <property type="match status" value="1"/>
</dbReference>
<dbReference type="SUPFAM" id="SSF64484">
    <property type="entry name" value="beta and beta-prime subunits of DNA dependent RNA-polymerase"/>
    <property type="match status" value="1"/>
</dbReference>
<dbReference type="PROSITE" id="PS01166">
    <property type="entry name" value="RNA_POL_BETA"/>
    <property type="match status" value="1"/>
</dbReference>
<keyword id="KW-0240">DNA-directed RNA polymerase</keyword>
<keyword id="KW-0548">Nucleotidyltransferase</keyword>
<keyword id="KW-0804">Transcription</keyword>
<keyword id="KW-0808">Transferase</keyword>
<sequence length="1342" mass="150571">MVYSYTEKKRIRKDFGKRPQVLDVPYLLSIQLDSFQKFIEQDPEGQYGLEAAFRSVFPIQSYSGNSELQYVSYRLGEPVFDVQECQIRGVTYSAPLRVKLRLVIYEREAPEGTVKDIKEQEVYMGEIPLMTDNGTFVINGTERVIVSQLHRSPGVFFDSDKGKTHSSGKVLYNARIIPYRGSWLDFEFDPKDNLFVRIDRRRKLPATIILRALNYTTEQILDLFFEKVVFEIRDNKLQMELIPERLRGETASFDIEANGKVYVEKGRRITARHIRQLEKDDIKHIEVPVEYIAGKVVSKDYVDESTGELICAANMELSLDLLAKLSQSGHKRIETLFTNDLDHGPYISETVRVDPTNDRLSALVEIYRMMRPGEPPTREAAESLFENLFFSEDRYDLSAVGRMKFNRSLLRDEIEGSGILSKDDIIDVMKKLIDIRNGKGEVDDIDHLGNRRIRSVGEMAENQFRVGLVRVERAVKERLSLGDLDTLMPQDMINAKPISAAVKEFFGSSQLSQFMDQNNPLSEITHKRRISALGPGGLTRERAGFEVRDVHPTHYGRVCPIETPEGPNIGLINSLSVYAQTNEYGFLETPYRRVVDGVVTDEIHYLSAIEEGNYVIAQANSNLDDEGHFVEDLVTCRSKGESSLFSRDQVDYMDVSTQQVVSVGASLIPFLEHDDANRALMGANMQRQAVPTLRADKPLVGTGMERAVAVDSGVTAVAKRGGTVQYVDASRIVIKVNEDEMYPGEAGIDIYNLTKYTRSNQNTCINQMPCVSLGEPVERGDVLADGPSTDLGELALGQNMRVAFMPWNGYNFEDSILVSERVVQEDRFTTIHIQELACVSRDTKLGPEEITADIPNVGEAALSKLDESGIVYIGAEVTGGDILVGKVTPKGETQLTPEEKLLRAIFGEKASDVKDSSLRVPNGVSGTVIDVQVFTRDGVEKDKRALEIEEMQLKQAKKDLSEELQILEAGLFSRIRAVLVSGGVEAEKLDKLPRDRWLELGLTDEEKQNQLEQLAEQYDELKHEFEKKLEAKRRKITQGDDLAPGVLKIVKVYLAVKRRIQPGDKMAGRHGNKGVISKINPIEDMPYDENGTPVDIVLNPLGVPSRMNIGQILETHLGMAAKGIGDKINAMLKQQQEVAKLREFIQRAYDLGADVRQKVDLSTFSDDEVLRLAENLRKGMPIATPVFDGAKEAEIKELLKLGDLPTSGQITLFDGRTGEQFERPVTVGYMYMLKLNHLVDDKMHARSTGSYSLVTQQPLGGKAQFGGQRFGEMEVWALEAYGAAYTLQEMLTVKSDDVNGRTKMYKNIVDGNHQMEPGMPESFNVLLKEIRSLGINIELEDE</sequence>
<name>RPOB_SALPC</name>
<reference key="1">
    <citation type="journal article" date="2009" name="PLoS ONE">
        <title>Salmonella paratyphi C: genetic divergence from Salmonella choleraesuis and pathogenic convergence with Salmonella typhi.</title>
        <authorList>
            <person name="Liu W.-Q."/>
            <person name="Feng Y."/>
            <person name="Wang Y."/>
            <person name="Zou Q.-H."/>
            <person name="Chen F."/>
            <person name="Guo J.-T."/>
            <person name="Peng Y.-H."/>
            <person name="Jin Y."/>
            <person name="Li Y.-G."/>
            <person name="Hu S.-N."/>
            <person name="Johnston R.N."/>
            <person name="Liu G.-R."/>
            <person name="Liu S.-L."/>
        </authorList>
    </citation>
    <scope>NUCLEOTIDE SEQUENCE [LARGE SCALE GENOMIC DNA]</scope>
    <source>
        <strain>RKS4594</strain>
    </source>
</reference>
<evidence type="ECO:0000255" key="1">
    <source>
        <dbReference type="HAMAP-Rule" id="MF_01321"/>
    </source>
</evidence>